<sequence>MPKITKIEVQKKNKERFNLFLDEQFEMGIDIDTLVKFNLKKGQQLEAADMAEIQKYDHYRIGLNKAIQYLSYKKRTEKEVIQYLQKEEISEQAISEVIEYCYREKLIDHQDYAESLKNTMIRTTDKGPKIYQQKLYQLGIEPNIIEMFTELYREQQELDDIIQIAEKISKTKKGPQNKVKEKVMQSLIQKGFEMETIHAVLNEMDFTQDEAVLDDLLQRDLEKIYNKNRKKYTQQKLISKTIEGLMRKGYKYDKIKAKLEESGIADGTEEIE</sequence>
<keyword id="KW-0963">Cytoplasm</keyword>
<name>RECX_STAA2</name>
<accession>A6U2X7</accession>
<dbReference type="EMBL" id="CP000736">
    <property type="protein sequence ID" value="ABR52795.1"/>
    <property type="molecule type" value="Genomic_DNA"/>
</dbReference>
<dbReference type="SMR" id="A6U2X7"/>
<dbReference type="KEGG" id="sah:SaurJH1_1961"/>
<dbReference type="HOGENOM" id="CLU_066607_4_0_9"/>
<dbReference type="GO" id="GO:0005737">
    <property type="term" value="C:cytoplasm"/>
    <property type="evidence" value="ECO:0007669"/>
    <property type="project" value="UniProtKB-SubCell"/>
</dbReference>
<dbReference type="GO" id="GO:0006282">
    <property type="term" value="P:regulation of DNA repair"/>
    <property type="evidence" value="ECO:0007669"/>
    <property type="project" value="UniProtKB-UniRule"/>
</dbReference>
<dbReference type="Gene3D" id="1.10.10.10">
    <property type="entry name" value="Winged helix-like DNA-binding domain superfamily/Winged helix DNA-binding domain"/>
    <property type="match status" value="4"/>
</dbReference>
<dbReference type="HAMAP" id="MF_01114">
    <property type="entry name" value="RecX"/>
    <property type="match status" value="1"/>
</dbReference>
<dbReference type="InterPro" id="IPR053926">
    <property type="entry name" value="RecX_HTH_1st"/>
</dbReference>
<dbReference type="InterPro" id="IPR053925">
    <property type="entry name" value="RecX_HTH_3rd"/>
</dbReference>
<dbReference type="InterPro" id="IPR003783">
    <property type="entry name" value="Regulatory_RecX"/>
</dbReference>
<dbReference type="InterPro" id="IPR036388">
    <property type="entry name" value="WH-like_DNA-bd_sf"/>
</dbReference>
<dbReference type="NCBIfam" id="NF010733">
    <property type="entry name" value="PRK14135.1"/>
    <property type="match status" value="1"/>
</dbReference>
<dbReference type="PANTHER" id="PTHR33602">
    <property type="entry name" value="REGULATORY PROTEIN RECX FAMILY PROTEIN"/>
    <property type="match status" value="1"/>
</dbReference>
<dbReference type="PANTHER" id="PTHR33602:SF1">
    <property type="entry name" value="REGULATORY PROTEIN RECX FAMILY PROTEIN"/>
    <property type="match status" value="1"/>
</dbReference>
<dbReference type="Pfam" id="PF21982">
    <property type="entry name" value="RecX_HTH1"/>
    <property type="match status" value="1"/>
</dbReference>
<dbReference type="Pfam" id="PF21981">
    <property type="entry name" value="RecX_HTH3"/>
    <property type="match status" value="1"/>
</dbReference>
<protein>
    <recommendedName>
        <fullName evidence="1">Regulatory protein RecX</fullName>
    </recommendedName>
</protein>
<feature type="chain" id="PRO_1000084990" description="Regulatory protein RecX">
    <location>
        <begin position="1"/>
        <end position="272"/>
    </location>
</feature>
<proteinExistence type="inferred from homology"/>
<reference key="1">
    <citation type="submission" date="2007-06" db="EMBL/GenBank/DDBJ databases">
        <title>Complete sequence of chromosome of Staphylococcus aureus subsp. aureus JH1.</title>
        <authorList>
            <consortium name="US DOE Joint Genome Institute"/>
            <person name="Copeland A."/>
            <person name="Lucas S."/>
            <person name="Lapidus A."/>
            <person name="Barry K."/>
            <person name="Detter J.C."/>
            <person name="Glavina del Rio T."/>
            <person name="Hammon N."/>
            <person name="Israni S."/>
            <person name="Dalin E."/>
            <person name="Tice H."/>
            <person name="Pitluck S."/>
            <person name="Chain P."/>
            <person name="Malfatti S."/>
            <person name="Shin M."/>
            <person name="Vergez L."/>
            <person name="Schmutz J."/>
            <person name="Larimer F."/>
            <person name="Land M."/>
            <person name="Hauser L."/>
            <person name="Kyrpides N."/>
            <person name="Ivanova N."/>
            <person name="Tomasz A."/>
            <person name="Richardson P."/>
        </authorList>
    </citation>
    <scope>NUCLEOTIDE SEQUENCE [LARGE SCALE GENOMIC DNA]</scope>
    <source>
        <strain>JH1</strain>
    </source>
</reference>
<organism>
    <name type="scientific">Staphylococcus aureus (strain JH1)</name>
    <dbReference type="NCBI Taxonomy" id="359787"/>
    <lineage>
        <taxon>Bacteria</taxon>
        <taxon>Bacillati</taxon>
        <taxon>Bacillota</taxon>
        <taxon>Bacilli</taxon>
        <taxon>Bacillales</taxon>
        <taxon>Staphylococcaceae</taxon>
        <taxon>Staphylococcus</taxon>
    </lineage>
</organism>
<comment type="function">
    <text evidence="1">Modulates RecA activity.</text>
</comment>
<comment type="subcellular location">
    <subcellularLocation>
        <location evidence="1">Cytoplasm</location>
    </subcellularLocation>
</comment>
<comment type="similarity">
    <text evidence="1">Belongs to the RecX family.</text>
</comment>
<evidence type="ECO:0000255" key="1">
    <source>
        <dbReference type="HAMAP-Rule" id="MF_01114"/>
    </source>
</evidence>
<gene>
    <name evidence="1" type="primary">recX</name>
    <name type="ordered locus">SaurJH1_1961</name>
</gene>